<comment type="tissue specificity">
    <text evidence="1">Nacreous layer of shell.</text>
</comment>
<reference key="1">
    <citation type="journal article" date="2009" name="ChemBioChem">
        <title>Evolution of nacre: biochemistry and 'shellomics' of the shell organic matrix of the cephalopod Nautilus macromphalus.</title>
        <authorList>
            <person name="Marie B."/>
            <person name="Marin F."/>
            <person name="Marie A."/>
            <person name="Bedouet L."/>
            <person name="Dubost L."/>
            <person name="Alcaraz G."/>
            <person name="Milet C."/>
            <person name="Luquet G."/>
        </authorList>
    </citation>
    <scope>PROTEIN SEQUENCE</scope>
    <scope>TISSUE SPECIFICITY</scope>
    <source>
        <tissue>Shell</tissue>
    </source>
</reference>
<protein>
    <recommendedName>
        <fullName evidence="2">Uncharacterized protein SMPP14</fullName>
    </recommendedName>
</protein>
<feature type="chain" id="PRO_0000371495" description="Uncharacterized protein SMPP14">
    <location>
        <begin position="1" status="less than"/>
        <end position="8" status="greater than"/>
    </location>
</feature>
<feature type="non-terminal residue" evidence="2">
    <location>
        <position position="1"/>
    </location>
</feature>
<feature type="non-terminal residue" evidence="2">
    <location>
        <position position="8"/>
    </location>
</feature>
<evidence type="ECO:0000269" key="1">
    <source>
    </source>
</evidence>
<evidence type="ECO:0000303" key="2">
    <source>
    </source>
</evidence>
<sequence>DFFFDFDR</sequence>
<accession>P85379</accession>
<organism>
    <name type="scientific">Nautilus macromphalus</name>
    <name type="common">Bellybutton nautilus</name>
    <dbReference type="NCBI Taxonomy" id="34576"/>
    <lineage>
        <taxon>Eukaryota</taxon>
        <taxon>Metazoa</taxon>
        <taxon>Spiralia</taxon>
        <taxon>Lophotrochozoa</taxon>
        <taxon>Mollusca</taxon>
        <taxon>Cephalopoda</taxon>
        <taxon>Nautiloidea</taxon>
        <taxon>Nautilida</taxon>
        <taxon>Nautilidae</taxon>
        <taxon>Nautilus</taxon>
    </lineage>
</organism>
<keyword id="KW-0903">Direct protein sequencing</keyword>
<name>SMP14_NAUMA</name>
<proteinExistence type="evidence at protein level"/>